<name>RN149_HUMAN</name>
<proteinExistence type="evidence at protein level"/>
<reference key="1">
    <citation type="submission" date="2003-10" db="EMBL/GenBank/DDBJ databases">
        <title>Screening and cloning of the target genes transactivated by hepatitis B virus DNA polymerase using suppression subtractive hybridization (SSH) technique.</title>
        <authorList>
            <person name="Wang C."/>
            <person name="Cheng J."/>
            <person name="Lang Z."/>
            <person name="Ji D."/>
            <person name="Yang Y."/>
            <person name="Zhang L."/>
            <person name="Wu Y."/>
        </authorList>
    </citation>
    <scope>NUCLEOTIDE SEQUENCE [MRNA]</scope>
    <scope>VARIANT GLU-356</scope>
</reference>
<reference key="2">
    <citation type="journal article" date="2004" name="Nat. Genet.">
        <title>Complete sequencing and characterization of 21,243 full-length human cDNAs.</title>
        <authorList>
            <person name="Ota T."/>
            <person name="Suzuki Y."/>
            <person name="Nishikawa T."/>
            <person name="Otsuki T."/>
            <person name="Sugiyama T."/>
            <person name="Irie R."/>
            <person name="Wakamatsu A."/>
            <person name="Hayashi K."/>
            <person name="Sato H."/>
            <person name="Nagai K."/>
            <person name="Kimura K."/>
            <person name="Makita H."/>
            <person name="Sekine M."/>
            <person name="Obayashi M."/>
            <person name="Nishi T."/>
            <person name="Shibahara T."/>
            <person name="Tanaka T."/>
            <person name="Ishii S."/>
            <person name="Yamamoto J."/>
            <person name="Saito K."/>
            <person name="Kawai Y."/>
            <person name="Isono Y."/>
            <person name="Nakamura Y."/>
            <person name="Nagahari K."/>
            <person name="Murakami K."/>
            <person name="Yasuda T."/>
            <person name="Iwayanagi T."/>
            <person name="Wagatsuma M."/>
            <person name="Shiratori A."/>
            <person name="Sudo H."/>
            <person name="Hosoiri T."/>
            <person name="Kaku Y."/>
            <person name="Kodaira H."/>
            <person name="Kondo H."/>
            <person name="Sugawara M."/>
            <person name="Takahashi M."/>
            <person name="Kanda K."/>
            <person name="Yokoi T."/>
            <person name="Furuya T."/>
            <person name="Kikkawa E."/>
            <person name="Omura Y."/>
            <person name="Abe K."/>
            <person name="Kamihara K."/>
            <person name="Katsuta N."/>
            <person name="Sato K."/>
            <person name="Tanikawa M."/>
            <person name="Yamazaki M."/>
            <person name="Ninomiya K."/>
            <person name="Ishibashi T."/>
            <person name="Yamashita H."/>
            <person name="Murakawa K."/>
            <person name="Fujimori K."/>
            <person name="Tanai H."/>
            <person name="Kimata M."/>
            <person name="Watanabe M."/>
            <person name="Hiraoka S."/>
            <person name="Chiba Y."/>
            <person name="Ishida S."/>
            <person name="Ono Y."/>
            <person name="Takiguchi S."/>
            <person name="Watanabe S."/>
            <person name="Yosida M."/>
            <person name="Hotuta T."/>
            <person name="Kusano J."/>
            <person name="Kanehori K."/>
            <person name="Takahashi-Fujii A."/>
            <person name="Hara H."/>
            <person name="Tanase T.-O."/>
            <person name="Nomura Y."/>
            <person name="Togiya S."/>
            <person name="Komai F."/>
            <person name="Hara R."/>
            <person name="Takeuchi K."/>
            <person name="Arita M."/>
            <person name="Imose N."/>
            <person name="Musashino K."/>
            <person name="Yuuki H."/>
            <person name="Oshima A."/>
            <person name="Sasaki N."/>
            <person name="Aotsuka S."/>
            <person name="Yoshikawa Y."/>
            <person name="Matsunawa H."/>
            <person name="Ichihara T."/>
            <person name="Shiohata N."/>
            <person name="Sano S."/>
            <person name="Moriya S."/>
            <person name="Momiyama H."/>
            <person name="Satoh N."/>
            <person name="Takami S."/>
            <person name="Terashima Y."/>
            <person name="Suzuki O."/>
            <person name="Nakagawa S."/>
            <person name="Senoh A."/>
            <person name="Mizoguchi H."/>
            <person name="Goto Y."/>
            <person name="Shimizu F."/>
            <person name="Wakebe H."/>
            <person name="Hishigaki H."/>
            <person name="Watanabe T."/>
            <person name="Sugiyama A."/>
            <person name="Takemoto M."/>
            <person name="Kawakami B."/>
            <person name="Yamazaki M."/>
            <person name="Watanabe K."/>
            <person name="Kumagai A."/>
            <person name="Itakura S."/>
            <person name="Fukuzumi Y."/>
            <person name="Fujimori Y."/>
            <person name="Komiyama M."/>
            <person name="Tashiro H."/>
            <person name="Tanigami A."/>
            <person name="Fujiwara T."/>
            <person name="Ono T."/>
            <person name="Yamada K."/>
            <person name="Fujii Y."/>
            <person name="Ozaki K."/>
            <person name="Hirao M."/>
            <person name="Ohmori Y."/>
            <person name="Kawabata A."/>
            <person name="Hikiji T."/>
            <person name="Kobatake N."/>
            <person name="Inagaki H."/>
            <person name="Ikema Y."/>
            <person name="Okamoto S."/>
            <person name="Okitani R."/>
            <person name="Kawakami T."/>
            <person name="Noguchi S."/>
            <person name="Itoh T."/>
            <person name="Shigeta K."/>
            <person name="Senba T."/>
            <person name="Matsumura K."/>
            <person name="Nakajima Y."/>
            <person name="Mizuno T."/>
            <person name="Morinaga M."/>
            <person name="Sasaki M."/>
            <person name="Togashi T."/>
            <person name="Oyama M."/>
            <person name="Hata H."/>
            <person name="Watanabe M."/>
            <person name="Komatsu T."/>
            <person name="Mizushima-Sugano J."/>
            <person name="Satoh T."/>
            <person name="Shirai Y."/>
            <person name="Takahashi Y."/>
            <person name="Nakagawa K."/>
            <person name="Okumura K."/>
            <person name="Nagase T."/>
            <person name="Nomura N."/>
            <person name="Kikuchi H."/>
            <person name="Masuho Y."/>
            <person name="Yamashita R."/>
            <person name="Nakai K."/>
            <person name="Yada T."/>
            <person name="Nakamura Y."/>
            <person name="Ohara O."/>
            <person name="Isogai T."/>
            <person name="Sugano S."/>
        </authorList>
    </citation>
    <scope>NUCLEOTIDE SEQUENCE [LARGE SCALE MRNA]</scope>
    <scope>VARIANTS GLY-9 AND GLU-356</scope>
    <source>
        <tissue>Placenta</tissue>
        <tissue>Teratocarcinoma</tissue>
    </source>
</reference>
<reference key="3">
    <citation type="journal article" date="2007" name="BMC Genomics">
        <title>The full-ORF clone resource of the German cDNA consortium.</title>
        <authorList>
            <person name="Bechtel S."/>
            <person name="Rosenfelder H."/>
            <person name="Duda A."/>
            <person name="Schmidt C.P."/>
            <person name="Ernst U."/>
            <person name="Wellenreuther R."/>
            <person name="Mehrle A."/>
            <person name="Schuster C."/>
            <person name="Bahr A."/>
            <person name="Bloecker H."/>
            <person name="Heubner D."/>
            <person name="Hoerlein A."/>
            <person name="Michel G."/>
            <person name="Wedler H."/>
            <person name="Koehrer K."/>
            <person name="Ottenwaelder B."/>
            <person name="Poustka A."/>
            <person name="Wiemann S."/>
            <person name="Schupp I."/>
        </authorList>
    </citation>
    <scope>NUCLEOTIDE SEQUENCE [LARGE SCALE MRNA]</scope>
    <scope>VARIANT GLU-356</scope>
</reference>
<reference key="4">
    <citation type="journal article" date="2005" name="Nature">
        <title>Generation and annotation of the DNA sequences of human chromosomes 2 and 4.</title>
        <authorList>
            <person name="Hillier L.W."/>
            <person name="Graves T.A."/>
            <person name="Fulton R.S."/>
            <person name="Fulton L.A."/>
            <person name="Pepin K.H."/>
            <person name="Minx P."/>
            <person name="Wagner-McPherson C."/>
            <person name="Layman D."/>
            <person name="Wylie K."/>
            <person name="Sekhon M."/>
            <person name="Becker M.C."/>
            <person name="Fewell G.A."/>
            <person name="Delehaunty K.D."/>
            <person name="Miner T.L."/>
            <person name="Nash W.E."/>
            <person name="Kremitzki C."/>
            <person name="Oddy L."/>
            <person name="Du H."/>
            <person name="Sun H."/>
            <person name="Bradshaw-Cordum H."/>
            <person name="Ali J."/>
            <person name="Carter J."/>
            <person name="Cordes M."/>
            <person name="Harris A."/>
            <person name="Isak A."/>
            <person name="van Brunt A."/>
            <person name="Nguyen C."/>
            <person name="Du F."/>
            <person name="Courtney L."/>
            <person name="Kalicki J."/>
            <person name="Ozersky P."/>
            <person name="Abbott S."/>
            <person name="Armstrong J."/>
            <person name="Belter E.A."/>
            <person name="Caruso L."/>
            <person name="Cedroni M."/>
            <person name="Cotton M."/>
            <person name="Davidson T."/>
            <person name="Desai A."/>
            <person name="Elliott G."/>
            <person name="Erb T."/>
            <person name="Fronick C."/>
            <person name="Gaige T."/>
            <person name="Haakenson W."/>
            <person name="Haglund K."/>
            <person name="Holmes A."/>
            <person name="Harkins R."/>
            <person name="Kim K."/>
            <person name="Kruchowski S.S."/>
            <person name="Strong C.M."/>
            <person name="Grewal N."/>
            <person name="Goyea E."/>
            <person name="Hou S."/>
            <person name="Levy A."/>
            <person name="Martinka S."/>
            <person name="Mead K."/>
            <person name="McLellan M.D."/>
            <person name="Meyer R."/>
            <person name="Randall-Maher J."/>
            <person name="Tomlinson C."/>
            <person name="Dauphin-Kohlberg S."/>
            <person name="Kozlowicz-Reilly A."/>
            <person name="Shah N."/>
            <person name="Swearengen-Shahid S."/>
            <person name="Snider J."/>
            <person name="Strong J.T."/>
            <person name="Thompson J."/>
            <person name="Yoakum M."/>
            <person name="Leonard S."/>
            <person name="Pearman C."/>
            <person name="Trani L."/>
            <person name="Radionenko M."/>
            <person name="Waligorski J.E."/>
            <person name="Wang C."/>
            <person name="Rock S.M."/>
            <person name="Tin-Wollam A.-M."/>
            <person name="Maupin R."/>
            <person name="Latreille P."/>
            <person name="Wendl M.C."/>
            <person name="Yang S.-P."/>
            <person name="Pohl C."/>
            <person name="Wallis J.W."/>
            <person name="Spieth J."/>
            <person name="Bieri T.A."/>
            <person name="Berkowicz N."/>
            <person name="Nelson J.O."/>
            <person name="Osborne J."/>
            <person name="Ding L."/>
            <person name="Meyer R."/>
            <person name="Sabo A."/>
            <person name="Shotland Y."/>
            <person name="Sinha P."/>
            <person name="Wohldmann P.E."/>
            <person name="Cook L.L."/>
            <person name="Hickenbotham M.T."/>
            <person name="Eldred J."/>
            <person name="Williams D."/>
            <person name="Jones T.A."/>
            <person name="She X."/>
            <person name="Ciccarelli F.D."/>
            <person name="Izaurralde E."/>
            <person name="Taylor J."/>
            <person name="Schmutz J."/>
            <person name="Myers R.M."/>
            <person name="Cox D.R."/>
            <person name="Huang X."/>
            <person name="McPherson J.D."/>
            <person name="Mardis E.R."/>
            <person name="Clifton S.W."/>
            <person name="Warren W.C."/>
            <person name="Chinwalla A.T."/>
            <person name="Eddy S.R."/>
            <person name="Marra M.A."/>
            <person name="Ovcharenko I."/>
            <person name="Furey T.S."/>
            <person name="Miller W."/>
            <person name="Eichler E.E."/>
            <person name="Bork P."/>
            <person name="Suyama M."/>
            <person name="Torrents D."/>
            <person name="Waterston R.H."/>
            <person name="Wilson R.K."/>
        </authorList>
    </citation>
    <scope>NUCLEOTIDE SEQUENCE [LARGE SCALE GENOMIC DNA]</scope>
</reference>
<reference key="5">
    <citation type="journal article" date="2004" name="Genome Res.">
        <title>The status, quality, and expansion of the NIH full-length cDNA project: the Mammalian Gene Collection (MGC).</title>
        <authorList>
            <consortium name="The MGC Project Team"/>
        </authorList>
    </citation>
    <scope>NUCLEOTIDE SEQUENCE [LARGE SCALE MRNA]</scope>
    <scope>VARIANTS GLY-9; PHE-344 AND GLU-356</scope>
    <source>
        <tissue>Brain</tissue>
        <tissue>Cervix</tissue>
        <tissue>Placenta</tissue>
    </source>
</reference>
<reference key="6">
    <citation type="journal article" date="2012" name="J. Biol. Chem.">
        <title>Ring finger protein 149 is an E3 ubiquitin ligase active on wild-type v-Raf murine sarcoma viral oncogene homolog B1 (BRAF).</title>
        <authorList>
            <person name="Hong S.W."/>
            <person name="Jin D.H."/>
            <person name="Shin J.S."/>
            <person name="Moon J.H."/>
            <person name="Na Y.S."/>
            <person name="Jung K.A."/>
            <person name="Kim S.M."/>
            <person name="Kim J.C."/>
            <person name="Kim K.P."/>
            <person name="Hong Y.S."/>
            <person name="Lee J.L."/>
            <person name="Choi E.K."/>
            <person name="Lee J.S."/>
            <person name="Kim T.W."/>
        </authorList>
    </citation>
    <scope>FUNCTION</scope>
</reference>
<reference key="7">
    <citation type="journal article" date="2006" name="Science">
        <title>The consensus coding sequences of human breast and colorectal cancers.</title>
        <authorList>
            <person name="Sjoeblom T."/>
            <person name="Jones S."/>
            <person name="Wood L.D."/>
            <person name="Parsons D.W."/>
            <person name="Lin J."/>
            <person name="Barber T.D."/>
            <person name="Mandelker D."/>
            <person name="Leary R.J."/>
            <person name="Ptak J."/>
            <person name="Silliman N."/>
            <person name="Szabo S."/>
            <person name="Buckhaults P."/>
            <person name="Farrell C."/>
            <person name="Meeh P."/>
            <person name="Markowitz S.D."/>
            <person name="Willis J."/>
            <person name="Dawson D."/>
            <person name="Willson J.K.V."/>
            <person name="Gazdar A.F."/>
            <person name="Hartigan J."/>
            <person name="Wu L."/>
            <person name="Liu C."/>
            <person name="Parmigiani G."/>
            <person name="Park B.H."/>
            <person name="Bachman K.E."/>
            <person name="Papadopoulos N."/>
            <person name="Vogelstein B."/>
            <person name="Kinzler K.W."/>
            <person name="Velculescu V.E."/>
        </authorList>
    </citation>
    <scope>VARIANT [LARGE SCALE ANALYSIS] LYS-7</scope>
</reference>
<dbReference type="EC" id="2.3.2.27"/>
<dbReference type="EMBL" id="AY450390">
    <property type="protein sequence ID" value="AAR21083.1"/>
    <property type="molecule type" value="mRNA"/>
</dbReference>
<dbReference type="EMBL" id="AK074985">
    <property type="protein sequence ID" value="BAC11334.1"/>
    <property type="molecule type" value="mRNA"/>
</dbReference>
<dbReference type="EMBL" id="AK075141">
    <property type="protein sequence ID" value="BAC11430.1"/>
    <property type="molecule type" value="mRNA"/>
</dbReference>
<dbReference type="EMBL" id="AM392566">
    <property type="protein sequence ID" value="CAL37444.1"/>
    <property type="molecule type" value="mRNA"/>
</dbReference>
<dbReference type="EMBL" id="AC013722">
    <property type="status" value="NOT_ANNOTATED_CDS"/>
    <property type="molecule type" value="Genomic_DNA"/>
</dbReference>
<dbReference type="EMBL" id="AC073643">
    <property type="protein sequence ID" value="AAY14775.1"/>
    <property type="molecule type" value="Genomic_DNA"/>
</dbReference>
<dbReference type="EMBL" id="BC019355">
    <property type="protein sequence ID" value="AAH19355.2"/>
    <property type="molecule type" value="mRNA"/>
</dbReference>
<dbReference type="EMBL" id="BC032328">
    <property type="protein sequence ID" value="AAH32328.2"/>
    <property type="molecule type" value="mRNA"/>
</dbReference>
<dbReference type="EMBL" id="BC045743">
    <property type="protein sequence ID" value="AAH45743.1"/>
    <property type="molecule type" value="mRNA"/>
</dbReference>
<dbReference type="CCDS" id="CCDS2051.1"/>
<dbReference type="RefSeq" id="NP_775918.2">
    <property type="nucleotide sequence ID" value="NM_173647.4"/>
</dbReference>
<dbReference type="SMR" id="Q8NC42"/>
<dbReference type="BioGRID" id="129991">
    <property type="interactions" value="607"/>
</dbReference>
<dbReference type="FunCoup" id="Q8NC42">
    <property type="interactions" value="1436"/>
</dbReference>
<dbReference type="IntAct" id="Q8NC42">
    <property type="interactions" value="152"/>
</dbReference>
<dbReference type="MINT" id="Q8NC42"/>
<dbReference type="STRING" id="9606.ENSP00000295317"/>
<dbReference type="GlyCosmos" id="Q8NC42">
    <property type="glycosylation" value="2 sites, No reported glycans"/>
</dbReference>
<dbReference type="GlyGen" id="Q8NC42">
    <property type="glycosylation" value="3 sites, 3 N-linked glycans (1 site)"/>
</dbReference>
<dbReference type="iPTMnet" id="Q8NC42"/>
<dbReference type="PhosphoSitePlus" id="Q8NC42"/>
<dbReference type="SwissPalm" id="Q8NC42"/>
<dbReference type="BioMuta" id="RNF149"/>
<dbReference type="DMDM" id="160332298"/>
<dbReference type="jPOST" id="Q8NC42"/>
<dbReference type="MassIVE" id="Q8NC42"/>
<dbReference type="PaxDb" id="9606-ENSP00000295317"/>
<dbReference type="PeptideAtlas" id="Q8NC42"/>
<dbReference type="ProteomicsDB" id="72848"/>
<dbReference type="Pumba" id="Q8NC42"/>
<dbReference type="Antibodypedia" id="2559">
    <property type="antibodies" value="188 antibodies from 23 providers"/>
</dbReference>
<dbReference type="DNASU" id="284996"/>
<dbReference type="Ensembl" id="ENST00000295317.4">
    <property type="protein sequence ID" value="ENSP00000295317.3"/>
    <property type="gene ID" value="ENSG00000163162.9"/>
</dbReference>
<dbReference type="GeneID" id="284996"/>
<dbReference type="KEGG" id="hsa:284996"/>
<dbReference type="MANE-Select" id="ENST00000295317.4">
    <property type="protein sequence ID" value="ENSP00000295317.3"/>
    <property type="RefSeq nucleotide sequence ID" value="NM_173647.4"/>
    <property type="RefSeq protein sequence ID" value="NP_775918.2"/>
</dbReference>
<dbReference type="UCSC" id="uc002taz.3">
    <property type="organism name" value="human"/>
</dbReference>
<dbReference type="AGR" id="HGNC:23137"/>
<dbReference type="CTD" id="284996"/>
<dbReference type="DisGeNET" id="284996"/>
<dbReference type="GeneCards" id="RNF149"/>
<dbReference type="HGNC" id="HGNC:23137">
    <property type="gene designation" value="RNF149"/>
</dbReference>
<dbReference type="HPA" id="ENSG00000163162">
    <property type="expression patterns" value="Low tissue specificity"/>
</dbReference>
<dbReference type="neXtProt" id="NX_Q8NC42"/>
<dbReference type="OpenTargets" id="ENSG00000163162"/>
<dbReference type="PharmGKB" id="PA134895641"/>
<dbReference type="VEuPathDB" id="HostDB:ENSG00000163162"/>
<dbReference type="eggNOG" id="KOG4628">
    <property type="taxonomic scope" value="Eukaryota"/>
</dbReference>
<dbReference type="GeneTree" id="ENSGT00940000161020"/>
<dbReference type="HOGENOM" id="CLU_049885_1_0_1"/>
<dbReference type="InParanoid" id="Q8NC42"/>
<dbReference type="OMA" id="MAWRGPE"/>
<dbReference type="OrthoDB" id="9984778at2759"/>
<dbReference type="PAN-GO" id="Q8NC42">
    <property type="GO annotations" value="3 GO annotations based on evolutionary models"/>
</dbReference>
<dbReference type="PhylomeDB" id="Q8NC42"/>
<dbReference type="TreeFam" id="TF317486"/>
<dbReference type="PathwayCommons" id="Q8NC42"/>
<dbReference type="SignaLink" id="Q8NC42"/>
<dbReference type="SIGNOR" id="Q8NC42"/>
<dbReference type="UniPathway" id="UPA00143"/>
<dbReference type="BioGRID-ORCS" id="284996">
    <property type="hits" value="10 hits in 1194 CRISPR screens"/>
</dbReference>
<dbReference type="ChiTaRS" id="RNF149">
    <property type="organism name" value="human"/>
</dbReference>
<dbReference type="GenomeRNAi" id="284996"/>
<dbReference type="Pharos" id="Q8NC42">
    <property type="development level" value="Tdark"/>
</dbReference>
<dbReference type="PRO" id="PR:Q8NC42"/>
<dbReference type="Proteomes" id="UP000005640">
    <property type="component" value="Chromosome 2"/>
</dbReference>
<dbReference type="RNAct" id="Q8NC42">
    <property type="molecule type" value="protein"/>
</dbReference>
<dbReference type="Bgee" id="ENSG00000163162">
    <property type="expression patterns" value="Expressed in blood and 183 other cell types or tissues"/>
</dbReference>
<dbReference type="ExpressionAtlas" id="Q8NC42">
    <property type="expression patterns" value="baseline and differential"/>
</dbReference>
<dbReference type="GO" id="GO:0005737">
    <property type="term" value="C:cytoplasm"/>
    <property type="evidence" value="ECO:0000318"/>
    <property type="project" value="GO_Central"/>
</dbReference>
<dbReference type="GO" id="GO:0005783">
    <property type="term" value="C:endoplasmic reticulum"/>
    <property type="evidence" value="ECO:0000318"/>
    <property type="project" value="GO_Central"/>
</dbReference>
<dbReference type="GO" id="GO:0005794">
    <property type="term" value="C:Golgi apparatus"/>
    <property type="evidence" value="ECO:0000318"/>
    <property type="project" value="GO_Central"/>
</dbReference>
<dbReference type="GO" id="GO:0005770">
    <property type="term" value="C:late endosome"/>
    <property type="evidence" value="ECO:0000318"/>
    <property type="project" value="GO_Central"/>
</dbReference>
<dbReference type="GO" id="GO:0016020">
    <property type="term" value="C:membrane"/>
    <property type="evidence" value="ECO:0007005"/>
    <property type="project" value="UniProtKB"/>
</dbReference>
<dbReference type="GO" id="GO:0061630">
    <property type="term" value="F:ubiquitin protein ligase activity"/>
    <property type="evidence" value="ECO:0000318"/>
    <property type="project" value="GO_Central"/>
</dbReference>
<dbReference type="GO" id="GO:0008270">
    <property type="term" value="F:zinc ion binding"/>
    <property type="evidence" value="ECO:0007669"/>
    <property type="project" value="UniProtKB-KW"/>
</dbReference>
<dbReference type="GO" id="GO:0071466">
    <property type="term" value="P:cellular response to xenobiotic stimulus"/>
    <property type="evidence" value="ECO:0007669"/>
    <property type="project" value="Ensembl"/>
</dbReference>
<dbReference type="GO" id="GO:0043409">
    <property type="term" value="P:negative regulation of MAPK cascade"/>
    <property type="evidence" value="ECO:0007669"/>
    <property type="project" value="Ensembl"/>
</dbReference>
<dbReference type="GO" id="GO:0016567">
    <property type="term" value="P:protein ubiquitination"/>
    <property type="evidence" value="ECO:0007669"/>
    <property type="project" value="UniProtKB-UniPathway"/>
</dbReference>
<dbReference type="GO" id="GO:0031647">
    <property type="term" value="P:regulation of protein stability"/>
    <property type="evidence" value="ECO:0007669"/>
    <property type="project" value="Ensembl"/>
</dbReference>
<dbReference type="GO" id="GO:0006511">
    <property type="term" value="P:ubiquitin-dependent protein catabolic process"/>
    <property type="evidence" value="ECO:0000318"/>
    <property type="project" value="GO_Central"/>
</dbReference>
<dbReference type="CDD" id="cd02122">
    <property type="entry name" value="PA_GRAIL_like"/>
    <property type="match status" value="1"/>
</dbReference>
<dbReference type="CDD" id="cd16804">
    <property type="entry name" value="RING-H2_RNF149"/>
    <property type="match status" value="1"/>
</dbReference>
<dbReference type="FunFam" id="3.50.30.30:FF:000003">
    <property type="entry name" value="E3 ubiquitin-protein ligase RNF128"/>
    <property type="match status" value="1"/>
</dbReference>
<dbReference type="FunFam" id="3.30.40.10:FF:000009">
    <property type="entry name" value="E3 ubiquitin-protein ligase RNF130"/>
    <property type="match status" value="1"/>
</dbReference>
<dbReference type="Gene3D" id="3.50.30.30">
    <property type="match status" value="1"/>
</dbReference>
<dbReference type="Gene3D" id="3.30.40.10">
    <property type="entry name" value="Zinc/RING finger domain, C3HC4 (zinc finger)"/>
    <property type="match status" value="1"/>
</dbReference>
<dbReference type="InterPro" id="IPR046450">
    <property type="entry name" value="PA_dom_sf"/>
</dbReference>
<dbReference type="InterPro" id="IPR003137">
    <property type="entry name" value="PA_domain"/>
</dbReference>
<dbReference type="InterPro" id="IPR042712">
    <property type="entry name" value="RNF149_RING-H2"/>
</dbReference>
<dbReference type="InterPro" id="IPR001841">
    <property type="entry name" value="Znf_RING"/>
</dbReference>
<dbReference type="InterPro" id="IPR013083">
    <property type="entry name" value="Znf_RING/FYVE/PHD"/>
</dbReference>
<dbReference type="PANTHER" id="PTHR46539">
    <property type="entry name" value="E3 UBIQUITIN-PROTEIN LIGASE ATL42"/>
    <property type="match status" value="1"/>
</dbReference>
<dbReference type="PANTHER" id="PTHR46539:SF26">
    <property type="entry name" value="E3 UBIQUITIN-PROTEIN LIGASE RNF149"/>
    <property type="match status" value="1"/>
</dbReference>
<dbReference type="Pfam" id="PF02225">
    <property type="entry name" value="PA"/>
    <property type="match status" value="1"/>
</dbReference>
<dbReference type="Pfam" id="PF13639">
    <property type="entry name" value="zf-RING_2"/>
    <property type="match status" value="1"/>
</dbReference>
<dbReference type="SMART" id="SM00184">
    <property type="entry name" value="RING"/>
    <property type="match status" value="1"/>
</dbReference>
<dbReference type="SUPFAM" id="SSF52025">
    <property type="entry name" value="PA domain"/>
    <property type="match status" value="1"/>
</dbReference>
<dbReference type="SUPFAM" id="SSF57850">
    <property type="entry name" value="RING/U-box"/>
    <property type="match status" value="1"/>
</dbReference>
<dbReference type="PROSITE" id="PS50089">
    <property type="entry name" value="ZF_RING_2"/>
    <property type="match status" value="1"/>
</dbReference>
<protein>
    <recommendedName>
        <fullName>E3 ubiquitin-protein ligase RNF149</fullName>
        <ecNumber>2.3.2.27</ecNumber>
    </recommendedName>
    <alternativeName>
        <fullName>DNA polymerase-transactivated protein 2</fullName>
    </alternativeName>
    <alternativeName>
        <fullName>RING finger protein 149</fullName>
    </alternativeName>
    <alternativeName>
        <fullName evidence="12">RING-type E3 ubiquitin transferase RNF149</fullName>
    </alternativeName>
</protein>
<feature type="signal peptide" evidence="3">
    <location>
        <begin position="1"/>
        <end position="32"/>
    </location>
</feature>
<feature type="chain" id="PRO_0000261611" description="E3 ubiquitin-protein ligase RNF149">
    <location>
        <begin position="33"/>
        <end position="400"/>
    </location>
</feature>
<feature type="transmembrane region" description="Helical" evidence="3">
    <location>
        <begin position="201"/>
        <end position="221"/>
    </location>
</feature>
<feature type="domain" description="PA">
    <location>
        <begin position="67"/>
        <end position="175"/>
    </location>
</feature>
<feature type="zinc finger region" description="RING-type; atypical" evidence="4">
    <location>
        <begin position="269"/>
        <end position="310"/>
    </location>
</feature>
<feature type="region of interest" description="Disordered" evidence="5">
    <location>
        <begin position="325"/>
        <end position="400"/>
    </location>
</feature>
<feature type="compositionally biased region" description="Low complexity" evidence="5">
    <location>
        <begin position="356"/>
        <end position="368"/>
    </location>
</feature>
<feature type="compositionally biased region" description="Basic and acidic residues" evidence="5">
    <location>
        <begin position="389"/>
        <end position="400"/>
    </location>
</feature>
<feature type="modified residue" description="Phosphoserine" evidence="2">
    <location>
        <position position="345"/>
    </location>
</feature>
<feature type="glycosylation site" description="N-linked (GlcNAc...) asparagine" evidence="3">
    <location>
        <position position="52"/>
    </location>
</feature>
<feature type="glycosylation site" description="N-linked (GlcNAc...) asparagine" evidence="3">
    <location>
        <position position="145"/>
    </location>
</feature>
<feature type="sequence variant" id="VAR_035958" description="In a breast cancer sample; somatic mutation; dbSNP:rs763258401." evidence="8">
    <original>E</original>
    <variation>K</variation>
    <location>
        <position position="7"/>
    </location>
</feature>
<feature type="sequence variant" id="VAR_029455" description="In dbSNP:rs11123868." evidence="6 7">
    <original>S</original>
    <variation>G</variation>
    <location>
        <position position="9"/>
    </location>
</feature>
<feature type="sequence variant" id="VAR_029456" description="In dbSNP:rs17856945." evidence="7">
    <original>L</original>
    <variation>F</variation>
    <location>
        <position position="344"/>
    </location>
</feature>
<feature type="sequence variant" id="VAR_029457" description="In dbSNP:rs13151." evidence="6 7 9 11">
    <original>D</original>
    <variation>E</variation>
    <location>
        <position position="356"/>
    </location>
</feature>
<comment type="function">
    <text evidence="10">E3 ubiquitin-protein ligase. Ubiquitinates BRAF, inducing its proteasomal degradation.</text>
</comment>
<comment type="catalytic activity">
    <reaction>
        <text>S-ubiquitinyl-[E2 ubiquitin-conjugating enzyme]-L-cysteine + [acceptor protein]-L-lysine = [E2 ubiquitin-conjugating enzyme]-L-cysteine + N(6)-ubiquitinyl-[acceptor protein]-L-lysine.</text>
        <dbReference type="EC" id="2.3.2.27"/>
    </reaction>
</comment>
<comment type="pathway">
    <text>Protein modification; protein ubiquitination.</text>
</comment>
<comment type="subcellular location">
    <subcellularLocation>
        <location evidence="12">Membrane</location>
        <topology evidence="12">Single-pass membrane protein</topology>
    </subcellularLocation>
</comment>
<comment type="domain">
    <text evidence="1">The RING-type zinc finger domain mediates binding to an E2 ubiquitin-conjugating enzyme.</text>
</comment>
<evidence type="ECO:0000250" key="1"/>
<evidence type="ECO:0000250" key="2">
    <source>
        <dbReference type="UniProtKB" id="Q3U2C5"/>
    </source>
</evidence>
<evidence type="ECO:0000255" key="3"/>
<evidence type="ECO:0000255" key="4">
    <source>
        <dbReference type="PROSITE-ProRule" id="PRU00175"/>
    </source>
</evidence>
<evidence type="ECO:0000256" key="5">
    <source>
        <dbReference type="SAM" id="MobiDB-lite"/>
    </source>
</evidence>
<evidence type="ECO:0000269" key="6">
    <source>
    </source>
</evidence>
<evidence type="ECO:0000269" key="7">
    <source>
    </source>
</evidence>
<evidence type="ECO:0000269" key="8">
    <source>
    </source>
</evidence>
<evidence type="ECO:0000269" key="9">
    <source>
    </source>
</evidence>
<evidence type="ECO:0000269" key="10">
    <source>
    </source>
</evidence>
<evidence type="ECO:0000269" key="11">
    <source ref="1"/>
</evidence>
<evidence type="ECO:0000305" key="12"/>
<keyword id="KW-0325">Glycoprotein</keyword>
<keyword id="KW-0472">Membrane</keyword>
<keyword id="KW-0479">Metal-binding</keyword>
<keyword id="KW-0597">Phosphoprotein</keyword>
<keyword id="KW-1267">Proteomics identification</keyword>
<keyword id="KW-1185">Reference proteome</keyword>
<keyword id="KW-0732">Signal</keyword>
<keyword id="KW-0808">Transferase</keyword>
<keyword id="KW-0812">Transmembrane</keyword>
<keyword id="KW-1133">Transmembrane helix</keyword>
<keyword id="KW-0833">Ubl conjugation pathway</keyword>
<keyword id="KW-0862">Zinc</keyword>
<keyword id="KW-0863">Zinc-finger</keyword>
<sequence length="400" mass="43165">MAWRRREASVGARGVLALALLALALCVPGARGRALEWFSAVVNIEYVDPQTNLTVWSVSESGRFGDSSPKEGAHGLVGVPWAPGGDLEGCAPDTRFFVPEPGGRGAAPWVALVARGGCTFKDKVLVAARRNASAVVLYNEERYGNITLPMSHAGTGNIVVIMISYPKGREILELVQKGIPVTMTIGVGTRHVQEFISGQSVVFVAIAFITMMIISLAWLIFYYIQRFLYTGSQIGSQSHRKETKKVIGQLLLHTVKHGEKGIDVDAENCAVCIENFKVKDIIRILPCKHIFHRICIDPWLLDHRTCPMCKLDVIKALGYWGEPGDVQEMPAPESPPGRDPAANLSLALPDDDGSDDSSPPSASPAESEPQCDPSFKGDAGENTALLEAGRSDSRHGGPIS</sequence>
<gene>
    <name type="primary">RNF149</name>
    <name type="synonym">DNAPTP2</name>
</gene>
<accession>Q8NC42</accession>
<accession>Q53S14</accession>
<accession>Q8N5I8</accession>
<accession>Q8NBY5</accession>
<accession>Q8WUU3</accession>
<organism>
    <name type="scientific">Homo sapiens</name>
    <name type="common">Human</name>
    <dbReference type="NCBI Taxonomy" id="9606"/>
    <lineage>
        <taxon>Eukaryota</taxon>
        <taxon>Metazoa</taxon>
        <taxon>Chordata</taxon>
        <taxon>Craniata</taxon>
        <taxon>Vertebrata</taxon>
        <taxon>Euteleostomi</taxon>
        <taxon>Mammalia</taxon>
        <taxon>Eutheria</taxon>
        <taxon>Euarchontoglires</taxon>
        <taxon>Primates</taxon>
        <taxon>Haplorrhini</taxon>
        <taxon>Catarrhini</taxon>
        <taxon>Hominidae</taxon>
        <taxon>Homo</taxon>
    </lineage>
</organism>